<organism>
    <name type="scientific">Schizosaccharomyces pombe (strain 972 / ATCC 24843)</name>
    <name type="common">Fission yeast</name>
    <dbReference type="NCBI Taxonomy" id="284812"/>
    <lineage>
        <taxon>Eukaryota</taxon>
        <taxon>Fungi</taxon>
        <taxon>Dikarya</taxon>
        <taxon>Ascomycota</taxon>
        <taxon>Taphrinomycotina</taxon>
        <taxon>Schizosaccharomycetes</taxon>
        <taxon>Schizosaccharomycetales</taxon>
        <taxon>Schizosaccharomycetaceae</taxon>
        <taxon>Schizosaccharomyces</taxon>
    </lineage>
</organism>
<sequence length="289" mass="32468">MSEYTTREVGALNTLDYQVYVEKNGTPISSWHDIPLYANAEKTILNMVVEIPRWTQAKLEITKEATLNPIKQDTKKGKLRFVRNCFPHHGYIWNYGAFPQTYEDPNVVHPETKAKGDSDPLDVCEIGEARGYTGQVKQVKVLGVMALLDEGETDWKVIVIDVNDPLAPKLNDIEDVERHMPGLIRATNEWFRIYKIPDGKPENSFAFSGECKNRKYAEEVVRECNEAWERLITGKTDAKSDFSLVNVSVTGSVANDPSVSSTIPPAQELAPAPVDPSVHKWFYISGSPL</sequence>
<reference key="1">
    <citation type="journal article" date="1990" name="Nucleic Acids Res.">
        <title>Nucleotide sequence of S. pombe inorganic pyrophosphatase.</title>
        <authorList>
            <person name="Kawasaki I."/>
            <person name="Adachi N."/>
            <person name="Ikeda H."/>
        </authorList>
    </citation>
    <scope>NUCLEOTIDE SEQUENCE [GENOMIC DNA]</scope>
</reference>
<reference key="2">
    <citation type="journal article" date="2002" name="Nature">
        <title>The genome sequence of Schizosaccharomyces pombe.</title>
        <authorList>
            <person name="Wood V."/>
            <person name="Gwilliam R."/>
            <person name="Rajandream M.A."/>
            <person name="Lyne M.H."/>
            <person name="Lyne R."/>
            <person name="Stewart A."/>
            <person name="Sgouros J.G."/>
            <person name="Peat N."/>
            <person name="Hayles J."/>
            <person name="Baker S.G."/>
            <person name="Basham D."/>
            <person name="Bowman S."/>
            <person name="Brooks K."/>
            <person name="Brown D."/>
            <person name="Brown S."/>
            <person name="Chillingworth T."/>
            <person name="Churcher C.M."/>
            <person name="Collins M."/>
            <person name="Connor R."/>
            <person name="Cronin A."/>
            <person name="Davis P."/>
            <person name="Feltwell T."/>
            <person name="Fraser A."/>
            <person name="Gentles S."/>
            <person name="Goble A."/>
            <person name="Hamlin N."/>
            <person name="Harris D.E."/>
            <person name="Hidalgo J."/>
            <person name="Hodgson G."/>
            <person name="Holroyd S."/>
            <person name="Hornsby T."/>
            <person name="Howarth S."/>
            <person name="Huckle E.J."/>
            <person name="Hunt S."/>
            <person name="Jagels K."/>
            <person name="James K.D."/>
            <person name="Jones L."/>
            <person name="Jones M."/>
            <person name="Leather S."/>
            <person name="McDonald S."/>
            <person name="McLean J."/>
            <person name="Mooney P."/>
            <person name="Moule S."/>
            <person name="Mungall K.L."/>
            <person name="Murphy L.D."/>
            <person name="Niblett D."/>
            <person name="Odell C."/>
            <person name="Oliver K."/>
            <person name="O'Neil S."/>
            <person name="Pearson D."/>
            <person name="Quail M.A."/>
            <person name="Rabbinowitsch E."/>
            <person name="Rutherford K.M."/>
            <person name="Rutter S."/>
            <person name="Saunders D."/>
            <person name="Seeger K."/>
            <person name="Sharp S."/>
            <person name="Skelton J."/>
            <person name="Simmonds M.N."/>
            <person name="Squares R."/>
            <person name="Squares S."/>
            <person name="Stevens K."/>
            <person name="Taylor K."/>
            <person name="Taylor R.G."/>
            <person name="Tivey A."/>
            <person name="Walsh S.V."/>
            <person name="Warren T."/>
            <person name="Whitehead S."/>
            <person name="Woodward J.R."/>
            <person name="Volckaert G."/>
            <person name="Aert R."/>
            <person name="Robben J."/>
            <person name="Grymonprez B."/>
            <person name="Weltjens I."/>
            <person name="Vanstreels E."/>
            <person name="Rieger M."/>
            <person name="Schaefer M."/>
            <person name="Mueller-Auer S."/>
            <person name="Gabel C."/>
            <person name="Fuchs M."/>
            <person name="Duesterhoeft A."/>
            <person name="Fritzc C."/>
            <person name="Holzer E."/>
            <person name="Moestl D."/>
            <person name="Hilbert H."/>
            <person name="Borzym K."/>
            <person name="Langer I."/>
            <person name="Beck A."/>
            <person name="Lehrach H."/>
            <person name="Reinhardt R."/>
            <person name="Pohl T.M."/>
            <person name="Eger P."/>
            <person name="Zimmermann W."/>
            <person name="Wedler H."/>
            <person name="Wambutt R."/>
            <person name="Purnelle B."/>
            <person name="Goffeau A."/>
            <person name="Cadieu E."/>
            <person name="Dreano S."/>
            <person name="Gloux S."/>
            <person name="Lelaure V."/>
            <person name="Mottier S."/>
            <person name="Galibert F."/>
            <person name="Aves S.J."/>
            <person name="Xiang Z."/>
            <person name="Hunt C."/>
            <person name="Moore K."/>
            <person name="Hurst S.M."/>
            <person name="Lucas M."/>
            <person name="Rochet M."/>
            <person name="Gaillardin C."/>
            <person name="Tallada V.A."/>
            <person name="Garzon A."/>
            <person name="Thode G."/>
            <person name="Daga R.R."/>
            <person name="Cruzado L."/>
            <person name="Jimenez J."/>
            <person name="Sanchez M."/>
            <person name="del Rey F."/>
            <person name="Benito J."/>
            <person name="Dominguez A."/>
            <person name="Revuelta J.L."/>
            <person name="Moreno S."/>
            <person name="Armstrong J."/>
            <person name="Forsburg S.L."/>
            <person name="Cerutti L."/>
            <person name="Lowe T."/>
            <person name="McCombie W.R."/>
            <person name="Paulsen I."/>
            <person name="Potashkin J."/>
            <person name="Shpakovski G.V."/>
            <person name="Ussery D."/>
            <person name="Barrell B.G."/>
            <person name="Nurse P."/>
        </authorList>
    </citation>
    <scope>NUCLEOTIDE SEQUENCE [LARGE SCALE GENOMIC DNA]</scope>
    <source>
        <strain>972 / ATCC 24843</strain>
    </source>
</reference>
<reference key="3">
    <citation type="journal article" date="1992" name="Biochem. Biophys. Res. Commun.">
        <title>Computer modeling of two inorganic pyrophosphatases.</title>
        <authorList>
            <person name="Vihinen M."/>
            <person name="Lundin M."/>
            <person name="Baltscheffsky H."/>
        </authorList>
    </citation>
    <scope>3D-STRUCTURE MODELING</scope>
</reference>
<comment type="catalytic activity">
    <reaction>
        <text>diphosphate + H2O = 2 phosphate + H(+)</text>
        <dbReference type="Rhea" id="RHEA:24576"/>
        <dbReference type="ChEBI" id="CHEBI:15377"/>
        <dbReference type="ChEBI" id="CHEBI:15378"/>
        <dbReference type="ChEBI" id="CHEBI:33019"/>
        <dbReference type="ChEBI" id="CHEBI:43474"/>
        <dbReference type="EC" id="3.6.1.1"/>
    </reaction>
</comment>
<comment type="cofactor">
    <cofactor evidence="1">
        <name>Mg(2+)</name>
        <dbReference type="ChEBI" id="CHEBI:18420"/>
    </cofactor>
</comment>
<comment type="subunit">
    <text>Homodimer.</text>
</comment>
<comment type="subcellular location">
    <subcellularLocation>
        <location>Cytoplasm</location>
    </subcellularLocation>
</comment>
<comment type="similarity">
    <text evidence="2">Belongs to the PPase family.</text>
</comment>
<protein>
    <recommendedName>
        <fullName>Inorganic pyrophosphatase</fullName>
        <ecNumber>3.6.1.1</ecNumber>
    </recommendedName>
    <alternativeName>
        <fullName>Pyrophosphate phospho-hydrolase</fullName>
        <shortName>PPase</shortName>
    </alternativeName>
</protein>
<evidence type="ECO:0000250" key="1"/>
<evidence type="ECO:0000305" key="2"/>
<dbReference type="EC" id="3.6.1.1"/>
<dbReference type="EMBL" id="X54301">
    <property type="protein sequence ID" value="CAA38199.1"/>
    <property type="molecule type" value="Genomic_DNA"/>
</dbReference>
<dbReference type="EMBL" id="CU329670">
    <property type="protein sequence ID" value="CAB11158.1"/>
    <property type="molecule type" value="Genomic_DNA"/>
</dbReference>
<dbReference type="PIR" id="S11496">
    <property type="entry name" value="S11496"/>
</dbReference>
<dbReference type="SMR" id="P19117"/>
<dbReference type="BioGRID" id="278494">
    <property type="interactions" value="5"/>
</dbReference>
<dbReference type="FunCoup" id="P19117">
    <property type="interactions" value="428"/>
</dbReference>
<dbReference type="STRING" id="284812.P19117"/>
<dbReference type="iPTMnet" id="P19117"/>
<dbReference type="PaxDb" id="4896-SPAC23C11.05.1"/>
<dbReference type="EnsemblFungi" id="SPAC23C11.05.1">
    <property type="protein sequence ID" value="SPAC23C11.05.1:pep"/>
    <property type="gene ID" value="SPAC23C11.05"/>
</dbReference>
<dbReference type="KEGG" id="spo:2542011"/>
<dbReference type="PomBase" id="SPAC23C11.05"/>
<dbReference type="VEuPathDB" id="FungiDB:SPAC23C11.05"/>
<dbReference type="eggNOG" id="KOG1626">
    <property type="taxonomic scope" value="Eukaryota"/>
</dbReference>
<dbReference type="HOGENOM" id="CLU_040684_0_1_1"/>
<dbReference type="InParanoid" id="P19117"/>
<dbReference type="OMA" id="LYANEQK"/>
<dbReference type="PhylomeDB" id="P19117"/>
<dbReference type="Reactome" id="R-SPO-379716">
    <property type="pathway name" value="Cytosolic tRNA aminoacylation"/>
</dbReference>
<dbReference type="Reactome" id="R-SPO-379726">
    <property type="pathway name" value="Mitochondrial tRNA aminoacylation"/>
</dbReference>
<dbReference type="Reactome" id="R-SPO-71737">
    <property type="pathway name" value="Pyrophosphate hydrolysis"/>
</dbReference>
<dbReference type="PRO" id="PR:P19117"/>
<dbReference type="Proteomes" id="UP000002485">
    <property type="component" value="Chromosome I"/>
</dbReference>
<dbReference type="GO" id="GO:0005829">
    <property type="term" value="C:cytosol"/>
    <property type="evidence" value="ECO:0007005"/>
    <property type="project" value="PomBase"/>
</dbReference>
<dbReference type="GO" id="GO:0005634">
    <property type="term" value="C:nucleus"/>
    <property type="evidence" value="ECO:0007005"/>
    <property type="project" value="PomBase"/>
</dbReference>
<dbReference type="GO" id="GO:0004427">
    <property type="term" value="F:inorganic diphosphate phosphatase activity"/>
    <property type="evidence" value="ECO:0000318"/>
    <property type="project" value="GO_Central"/>
</dbReference>
<dbReference type="GO" id="GO:0000287">
    <property type="term" value="F:magnesium ion binding"/>
    <property type="evidence" value="ECO:0007669"/>
    <property type="project" value="InterPro"/>
</dbReference>
<dbReference type="GO" id="GO:0006796">
    <property type="term" value="P:phosphate-containing compound metabolic process"/>
    <property type="evidence" value="ECO:0000318"/>
    <property type="project" value="GO_Central"/>
</dbReference>
<dbReference type="CDD" id="cd00412">
    <property type="entry name" value="pyrophosphatase"/>
    <property type="match status" value="1"/>
</dbReference>
<dbReference type="FunFam" id="3.90.80.10:FF:000004">
    <property type="entry name" value="Inorganic pyrophosphatase"/>
    <property type="match status" value="1"/>
</dbReference>
<dbReference type="Gene3D" id="3.90.80.10">
    <property type="entry name" value="Inorganic pyrophosphatase"/>
    <property type="match status" value="1"/>
</dbReference>
<dbReference type="InterPro" id="IPR008162">
    <property type="entry name" value="Pyrophosphatase"/>
</dbReference>
<dbReference type="InterPro" id="IPR036649">
    <property type="entry name" value="Pyrophosphatase_sf"/>
</dbReference>
<dbReference type="PANTHER" id="PTHR10286">
    <property type="entry name" value="INORGANIC PYROPHOSPHATASE"/>
    <property type="match status" value="1"/>
</dbReference>
<dbReference type="Pfam" id="PF00719">
    <property type="entry name" value="Pyrophosphatase"/>
    <property type="match status" value="1"/>
</dbReference>
<dbReference type="SUPFAM" id="SSF50324">
    <property type="entry name" value="Inorganic pyrophosphatase"/>
    <property type="match status" value="1"/>
</dbReference>
<dbReference type="PROSITE" id="PS00387">
    <property type="entry name" value="PPASE"/>
    <property type="match status" value="1"/>
</dbReference>
<proteinExistence type="inferred from homology"/>
<gene>
    <name type="primary">ppa1</name>
    <name type="synonym">ppa</name>
    <name type="ORF">SPAC23C11.05</name>
</gene>
<name>IPYR_SCHPO</name>
<keyword id="KW-0963">Cytoplasm</keyword>
<keyword id="KW-0378">Hydrolase</keyword>
<keyword id="KW-0460">Magnesium</keyword>
<keyword id="KW-0479">Metal-binding</keyword>
<keyword id="KW-1185">Reference proteome</keyword>
<feature type="initiator methionine" description="Removed" evidence="1">
    <location>
        <position position="1"/>
    </location>
</feature>
<feature type="chain" id="PRO_0000137586" description="Inorganic pyrophosphatase">
    <location>
        <begin position="2"/>
        <end position="289"/>
    </location>
</feature>
<feature type="binding site" evidence="1">
    <location>
        <position position="80"/>
    </location>
    <ligand>
        <name>diphosphate</name>
        <dbReference type="ChEBI" id="CHEBI:33019"/>
    </ligand>
</feature>
<feature type="binding site" evidence="1">
    <location>
        <position position="117"/>
    </location>
    <ligand>
        <name>Mg(2+)</name>
        <dbReference type="ChEBI" id="CHEBI:18420"/>
        <label>1</label>
    </ligand>
</feature>
<feature type="binding site" evidence="1">
    <location>
        <position position="122"/>
    </location>
    <ligand>
        <name>Mg(2+)</name>
        <dbReference type="ChEBI" id="CHEBI:18420"/>
        <label>1</label>
    </ligand>
</feature>
<feature type="binding site" evidence="1">
    <location>
        <position position="122"/>
    </location>
    <ligand>
        <name>Mg(2+)</name>
        <dbReference type="ChEBI" id="CHEBI:18420"/>
        <label>2</label>
    </ligand>
</feature>
<feature type="binding site" evidence="1">
    <location>
        <position position="154"/>
    </location>
    <ligand>
        <name>Mg(2+)</name>
        <dbReference type="ChEBI" id="CHEBI:18420"/>
        <label>1</label>
    </ligand>
</feature>
<accession>P19117</accession>